<feature type="chain" id="PRO_0000331332" description="Heme response regulator HssR">
    <location>
        <begin position="1"/>
        <end position="224"/>
    </location>
</feature>
<feature type="domain" description="Response regulatory" evidence="2">
    <location>
        <begin position="3"/>
        <end position="116"/>
    </location>
</feature>
<feature type="DNA-binding region" description="OmpR/PhoB-type" evidence="3">
    <location>
        <begin position="124"/>
        <end position="222"/>
    </location>
</feature>
<feature type="modified residue" description="4-aspartylphosphate" evidence="2">
    <location>
        <position position="52"/>
    </location>
</feature>
<protein>
    <recommendedName>
        <fullName>Heme response regulator HssR</fullName>
    </recommendedName>
</protein>
<organism>
    <name type="scientific">Staphylococcus aureus (strain USA300)</name>
    <dbReference type="NCBI Taxonomy" id="367830"/>
    <lineage>
        <taxon>Bacteria</taxon>
        <taxon>Bacillati</taxon>
        <taxon>Bacillota</taxon>
        <taxon>Bacilli</taxon>
        <taxon>Bacillales</taxon>
        <taxon>Staphylococcaceae</taxon>
        <taxon>Staphylococcus</taxon>
    </lineage>
</organism>
<dbReference type="EMBL" id="CP000255">
    <property type="protein sequence ID" value="ABD22469.1"/>
    <property type="molecule type" value="Genomic_DNA"/>
</dbReference>
<dbReference type="RefSeq" id="WP_000249497.1">
    <property type="nucleotide sequence ID" value="NZ_CP027476.1"/>
</dbReference>
<dbReference type="SMR" id="Q2FED5"/>
<dbReference type="KEGG" id="saa:SAUSA300_2308"/>
<dbReference type="HOGENOM" id="CLU_000445_30_3_9"/>
<dbReference type="OMA" id="ADDWMTK"/>
<dbReference type="Proteomes" id="UP000001939">
    <property type="component" value="Chromosome"/>
</dbReference>
<dbReference type="GO" id="GO:0005829">
    <property type="term" value="C:cytosol"/>
    <property type="evidence" value="ECO:0007669"/>
    <property type="project" value="TreeGrafter"/>
</dbReference>
<dbReference type="GO" id="GO:0032993">
    <property type="term" value="C:protein-DNA complex"/>
    <property type="evidence" value="ECO:0007669"/>
    <property type="project" value="TreeGrafter"/>
</dbReference>
<dbReference type="GO" id="GO:0000156">
    <property type="term" value="F:phosphorelay response regulator activity"/>
    <property type="evidence" value="ECO:0007669"/>
    <property type="project" value="TreeGrafter"/>
</dbReference>
<dbReference type="GO" id="GO:0000976">
    <property type="term" value="F:transcription cis-regulatory region binding"/>
    <property type="evidence" value="ECO:0007669"/>
    <property type="project" value="TreeGrafter"/>
</dbReference>
<dbReference type="GO" id="GO:0006355">
    <property type="term" value="P:regulation of DNA-templated transcription"/>
    <property type="evidence" value="ECO:0007669"/>
    <property type="project" value="InterPro"/>
</dbReference>
<dbReference type="CDD" id="cd17574">
    <property type="entry name" value="REC_OmpR"/>
    <property type="match status" value="1"/>
</dbReference>
<dbReference type="CDD" id="cd00383">
    <property type="entry name" value="trans_reg_C"/>
    <property type="match status" value="1"/>
</dbReference>
<dbReference type="FunFam" id="1.10.10.10:FF:000018">
    <property type="entry name" value="DNA-binding response regulator ResD"/>
    <property type="match status" value="1"/>
</dbReference>
<dbReference type="Gene3D" id="3.40.50.2300">
    <property type="match status" value="1"/>
</dbReference>
<dbReference type="Gene3D" id="6.10.250.690">
    <property type="match status" value="1"/>
</dbReference>
<dbReference type="Gene3D" id="1.10.10.10">
    <property type="entry name" value="Winged helix-like DNA-binding domain superfamily/Winged helix DNA-binding domain"/>
    <property type="match status" value="1"/>
</dbReference>
<dbReference type="InterPro" id="IPR011006">
    <property type="entry name" value="CheY-like_superfamily"/>
</dbReference>
<dbReference type="InterPro" id="IPR001867">
    <property type="entry name" value="OmpR/PhoB-type_DNA-bd"/>
</dbReference>
<dbReference type="InterPro" id="IPR001789">
    <property type="entry name" value="Sig_transdc_resp-reg_receiver"/>
</dbReference>
<dbReference type="InterPro" id="IPR039420">
    <property type="entry name" value="WalR-like"/>
</dbReference>
<dbReference type="InterPro" id="IPR036388">
    <property type="entry name" value="WH-like_DNA-bd_sf"/>
</dbReference>
<dbReference type="PANTHER" id="PTHR48111:SF49">
    <property type="entry name" value="HEME RESPONSE REGULATOR HSSR"/>
    <property type="match status" value="1"/>
</dbReference>
<dbReference type="PANTHER" id="PTHR48111">
    <property type="entry name" value="REGULATOR OF RPOS"/>
    <property type="match status" value="1"/>
</dbReference>
<dbReference type="Pfam" id="PF00072">
    <property type="entry name" value="Response_reg"/>
    <property type="match status" value="1"/>
</dbReference>
<dbReference type="Pfam" id="PF00486">
    <property type="entry name" value="Trans_reg_C"/>
    <property type="match status" value="1"/>
</dbReference>
<dbReference type="SMART" id="SM00448">
    <property type="entry name" value="REC"/>
    <property type="match status" value="1"/>
</dbReference>
<dbReference type="SMART" id="SM00862">
    <property type="entry name" value="Trans_reg_C"/>
    <property type="match status" value="1"/>
</dbReference>
<dbReference type="SUPFAM" id="SSF52172">
    <property type="entry name" value="CheY-like"/>
    <property type="match status" value="1"/>
</dbReference>
<dbReference type="PROSITE" id="PS51755">
    <property type="entry name" value="OMPR_PHOB"/>
    <property type="match status" value="1"/>
</dbReference>
<dbReference type="PROSITE" id="PS50110">
    <property type="entry name" value="RESPONSE_REGULATORY"/>
    <property type="match status" value="1"/>
</dbReference>
<reference key="1">
    <citation type="journal article" date="2006" name="Lancet">
        <title>Complete genome sequence of USA300, an epidemic clone of community-acquired meticillin-resistant Staphylococcus aureus.</title>
        <authorList>
            <person name="Diep B.A."/>
            <person name="Gill S.R."/>
            <person name="Chang R.F."/>
            <person name="Phan T.H."/>
            <person name="Chen J.H."/>
            <person name="Davidson M.G."/>
            <person name="Lin F."/>
            <person name="Lin J."/>
            <person name="Carleton H.A."/>
            <person name="Mongodin E.F."/>
            <person name="Sensabaugh G.F."/>
            <person name="Perdreau-Remington F."/>
        </authorList>
    </citation>
    <scope>NUCLEOTIDE SEQUENCE [LARGE SCALE GENOMIC DNA]</scope>
    <source>
        <strain>USA300</strain>
    </source>
</reference>
<evidence type="ECO:0000250" key="1"/>
<evidence type="ECO:0000255" key="2">
    <source>
        <dbReference type="PROSITE-ProRule" id="PRU00169"/>
    </source>
</evidence>
<evidence type="ECO:0000255" key="3">
    <source>
        <dbReference type="PROSITE-ProRule" id="PRU01091"/>
    </source>
</evidence>
<evidence type="ECO:0000305" key="4"/>
<sequence length="224" mass="25946">MVQCLVVDDDPRILNYIASHLQTEHIDAYTQPSGEAALKLLEKQRVDIAVVDIMMDGMDGFQLCNTLKNDYDIPVIMLTARDALSDKERAFISGTDDYVTKPFEVKELIFRIRAVLRRYNINSNSEMTIGNLTLNQSYLELQVSNKTMTLPNKEFQLLFMLAARPKQIFTREQIIEKIWGYDYEGDERTVDVHIKRLRQRLKKLNATLTIETVRGQGYKVENHV</sequence>
<gene>
    <name type="primary">hssR</name>
    <name type="ordered locus">SAUSA300_2308</name>
</gene>
<accession>Q2FED5</accession>
<name>HSSR_STAA3</name>
<comment type="function">
    <text evidence="1">Member of the two-component regulatory system HssS/HssR involved in intracellular heme homeostasis and tempering of staphylococcal virulence. Phosphorylated HssR binds to a direct repeat sequence within hrtAB promoter and activates the expression of hrtAB, an efflux pump, in response to extracellular heme, hemin, hemoglobin or blood (By similarity).</text>
</comment>
<comment type="subcellular location">
    <subcellularLocation>
        <location evidence="4">Cytoplasm</location>
    </subcellularLocation>
</comment>
<comment type="PTM">
    <text evidence="1">Phosphorylated by HssS.</text>
</comment>
<keyword id="KW-0010">Activator</keyword>
<keyword id="KW-0963">Cytoplasm</keyword>
<keyword id="KW-0238">DNA-binding</keyword>
<keyword id="KW-0597">Phosphoprotein</keyword>
<keyword id="KW-0804">Transcription</keyword>
<keyword id="KW-0805">Transcription regulation</keyword>
<keyword id="KW-0902">Two-component regulatory system</keyword>
<keyword id="KW-0843">Virulence</keyword>
<proteinExistence type="inferred from homology"/>